<accession>P05387</accession>
<accession>Q6FG96</accession>
<evidence type="ECO:0000250" key="1">
    <source>
        <dbReference type="UniProtKB" id="P99027"/>
    </source>
</evidence>
<evidence type="ECO:0000256" key="2">
    <source>
        <dbReference type="SAM" id="MobiDB-lite"/>
    </source>
</evidence>
<evidence type="ECO:0000269" key="3">
    <source>
    </source>
</evidence>
<evidence type="ECO:0000269" key="4">
    <source>
    </source>
</evidence>
<evidence type="ECO:0000303" key="5">
    <source>
    </source>
</evidence>
<evidence type="ECO:0000305" key="6"/>
<evidence type="ECO:0007744" key="7">
    <source>
    </source>
</evidence>
<evidence type="ECO:0007744" key="8">
    <source>
    </source>
</evidence>
<evidence type="ECO:0007744" key="9">
    <source>
    </source>
</evidence>
<evidence type="ECO:0007744" key="10">
    <source>
    </source>
</evidence>
<evidence type="ECO:0007744" key="11">
    <source>
    </source>
</evidence>
<evidence type="ECO:0007744" key="12">
    <source>
    </source>
</evidence>
<evidence type="ECO:0007744" key="13">
    <source>
    </source>
</evidence>
<evidence type="ECO:0007744" key="14">
    <source>
    </source>
</evidence>
<evidence type="ECO:0007744" key="15">
    <source>
    </source>
</evidence>
<evidence type="ECO:0007829" key="16">
    <source>
        <dbReference type="PDB" id="2LBF"/>
    </source>
</evidence>
<evidence type="ECO:0007829" key="17">
    <source>
        <dbReference type="PDB" id="4BEH"/>
    </source>
</evidence>
<evidence type="ECO:0007829" key="18">
    <source>
        <dbReference type="PDB" id="5DDZ"/>
    </source>
</evidence>
<protein>
    <recommendedName>
        <fullName evidence="5">Large ribosomal subunit protein P2</fullName>
    </recommendedName>
    <alternativeName>
        <fullName>60S acidic ribosomal protein P2</fullName>
    </alternativeName>
    <alternativeName>
        <fullName>Renal carcinoma antigen NY-REN-44</fullName>
    </alternativeName>
</protein>
<proteinExistence type="evidence at protein level"/>
<keyword id="KW-0002">3D-structure</keyword>
<keyword id="KW-0007">Acetylation</keyword>
<keyword id="KW-0903">Direct protein sequencing</keyword>
<keyword id="KW-0597">Phosphoprotein</keyword>
<keyword id="KW-1267">Proteomics identification</keyword>
<keyword id="KW-1185">Reference proteome</keyword>
<keyword id="KW-0687">Ribonucleoprotein</keyword>
<keyword id="KW-0689">Ribosomal protein</keyword>
<sequence length="115" mass="11665">MRYVASYLLAALGGNSSPSAKDIKKILDSVGIEADDDRLNKVISELNGKNIEDVIAQGIGKLASVPAGGAVAVSAAPGSAAPAAGSAPAAAEEKKDEKKEESEESDDDMGFGLFD</sequence>
<name>RLA2_HUMAN</name>
<comment type="function">
    <text>Plays an important role in the elongation step of protein synthesis.</text>
</comment>
<comment type="subunit">
    <text evidence="4">Heterodimer with P1 at the lateral ribosomal stalk of the large ribosomal subunit.</text>
</comment>
<comment type="interaction">
    <interactant intactId="EBI-352813">
        <id>P05387</id>
    </interactant>
    <interactant intactId="EBI-354582">
        <id>P05386</id>
        <label>RPLP1</label>
    </interactant>
    <organismsDiffer>false</organismsDiffer>
    <experiments>2</experiments>
</comment>
<comment type="similarity">
    <text evidence="6">Belongs to the eukaryotic ribosomal protein P1/P2 family.</text>
</comment>
<feature type="chain" id="PRO_0000157640" description="Large ribosomal subunit protein P2">
    <location>
        <begin position="1"/>
        <end position="115"/>
    </location>
</feature>
<feature type="region of interest" description="Disordered" evidence="2">
    <location>
        <begin position="78"/>
        <end position="115"/>
    </location>
</feature>
<feature type="compositionally biased region" description="Low complexity" evidence="2">
    <location>
        <begin position="78"/>
        <end position="90"/>
    </location>
</feature>
<feature type="compositionally biased region" description="Basic and acidic residues" evidence="2">
    <location>
        <begin position="91"/>
        <end position="101"/>
    </location>
</feature>
<feature type="modified residue" description="N-acetylmethionine" evidence="12">
    <location>
        <position position="1"/>
    </location>
</feature>
<feature type="modified residue" description="Phosphoserine" evidence="7 8 11 12 13 14">
    <location>
        <position position="17"/>
    </location>
</feature>
<feature type="modified residue" description="Phosphoserine" evidence="14">
    <location>
        <position position="19"/>
    </location>
</feature>
<feature type="modified residue" description="N6-acetyllysine; alternate" evidence="10">
    <location>
        <position position="21"/>
    </location>
</feature>
<feature type="modified residue" description="N6-succinyllysine; alternate" evidence="1">
    <location>
        <position position="21"/>
    </location>
</feature>
<feature type="modified residue" description="Phosphoserine" evidence="8 9 11 12 15">
    <location>
        <position position="79"/>
    </location>
</feature>
<feature type="modified residue" description="Phosphoserine" evidence="8 14 15">
    <location>
        <position position="86"/>
    </location>
</feature>
<feature type="modified residue" description="Phosphoserine" evidence="3">
    <location>
        <position position="102"/>
    </location>
</feature>
<feature type="modified residue" description="Phosphoserine" evidence="1">
    <location>
        <position position="105"/>
    </location>
</feature>
<feature type="strand" evidence="17">
    <location>
        <begin position="1"/>
        <end position="3"/>
    </location>
</feature>
<feature type="helix" evidence="16">
    <location>
        <begin position="4"/>
        <end position="13"/>
    </location>
</feature>
<feature type="helix" evidence="16">
    <location>
        <begin position="20"/>
        <end position="28"/>
    </location>
</feature>
<feature type="turn" evidence="16">
    <location>
        <begin position="29"/>
        <end position="31"/>
    </location>
</feature>
<feature type="helix" evidence="16">
    <location>
        <begin position="38"/>
        <end position="46"/>
    </location>
</feature>
<feature type="helix" evidence="16">
    <location>
        <begin position="51"/>
        <end position="55"/>
    </location>
</feature>
<feature type="strand" evidence="16">
    <location>
        <begin position="59"/>
        <end position="61"/>
    </location>
</feature>
<feature type="strand" evidence="17">
    <location>
        <begin position="63"/>
        <end position="66"/>
    </location>
</feature>
<feature type="turn" evidence="17">
    <location>
        <begin position="91"/>
        <end position="94"/>
    </location>
</feature>
<feature type="helix" evidence="18">
    <location>
        <begin position="112"/>
        <end position="114"/>
    </location>
</feature>
<organism>
    <name type="scientific">Homo sapiens</name>
    <name type="common">Human</name>
    <dbReference type="NCBI Taxonomy" id="9606"/>
    <lineage>
        <taxon>Eukaryota</taxon>
        <taxon>Metazoa</taxon>
        <taxon>Chordata</taxon>
        <taxon>Craniata</taxon>
        <taxon>Vertebrata</taxon>
        <taxon>Euteleostomi</taxon>
        <taxon>Mammalia</taxon>
        <taxon>Eutheria</taxon>
        <taxon>Euarchontoglires</taxon>
        <taxon>Primates</taxon>
        <taxon>Haplorrhini</taxon>
        <taxon>Catarrhini</taxon>
        <taxon>Hominidae</taxon>
        <taxon>Homo</taxon>
    </lineage>
</organism>
<gene>
    <name type="primary">RPLP2</name>
    <name type="synonym">D11S2243E</name>
    <name type="synonym">RPP2</name>
</gene>
<dbReference type="EMBL" id="M17887">
    <property type="protein sequence ID" value="AAA36472.1"/>
    <property type="molecule type" value="mRNA"/>
</dbReference>
<dbReference type="EMBL" id="AB061837">
    <property type="protein sequence ID" value="BAB79475.1"/>
    <property type="molecule type" value="Genomic_DNA"/>
</dbReference>
<dbReference type="EMBL" id="AK311954">
    <property type="protein sequence ID" value="BAG34894.1"/>
    <property type="molecule type" value="mRNA"/>
</dbReference>
<dbReference type="EMBL" id="CR542212">
    <property type="protein sequence ID" value="CAG47008.1"/>
    <property type="molecule type" value="mRNA"/>
</dbReference>
<dbReference type="EMBL" id="CR542248">
    <property type="protein sequence ID" value="CAG47044.1"/>
    <property type="molecule type" value="mRNA"/>
</dbReference>
<dbReference type="EMBL" id="AP006621">
    <property type="status" value="NOT_ANNOTATED_CDS"/>
    <property type="molecule type" value="Genomic_DNA"/>
</dbReference>
<dbReference type="EMBL" id="CH471158">
    <property type="protein sequence ID" value="EAX02393.1"/>
    <property type="molecule type" value="Genomic_DNA"/>
</dbReference>
<dbReference type="EMBL" id="BC005354">
    <property type="protein sequence ID" value="AAH05354.1"/>
    <property type="molecule type" value="mRNA"/>
</dbReference>
<dbReference type="EMBL" id="BC005920">
    <property type="protein sequence ID" value="AAH05920.1"/>
    <property type="molecule type" value="mRNA"/>
</dbReference>
<dbReference type="EMBL" id="BC007573">
    <property type="protein sequence ID" value="AAH07573.1"/>
    <property type="molecule type" value="mRNA"/>
</dbReference>
<dbReference type="EMBL" id="BC062314">
    <property type="protein sequence ID" value="AAH62314.1"/>
    <property type="molecule type" value="mRNA"/>
</dbReference>
<dbReference type="CCDS" id="CCDS7717.1"/>
<dbReference type="PIR" id="C27125">
    <property type="entry name" value="R6HUP2"/>
</dbReference>
<dbReference type="RefSeq" id="NP_000995.1">
    <property type="nucleotide sequence ID" value="NM_001004.4"/>
</dbReference>
<dbReference type="PDB" id="1S4J">
    <property type="method" value="NMR"/>
    <property type="chains" value="A=103-115"/>
</dbReference>
<dbReference type="PDB" id="2JDL">
    <property type="method" value="X-ray"/>
    <property type="resolution" value="2.20 A"/>
    <property type="chains" value="C/D=105-115"/>
</dbReference>
<dbReference type="PDB" id="2LBF">
    <property type="method" value="NMR"/>
    <property type="chains" value="B=1-69"/>
</dbReference>
<dbReference type="PDB" id="2W1O">
    <property type="method" value="NMR"/>
    <property type="chains" value="A/B=1-69"/>
</dbReference>
<dbReference type="PDB" id="4BEH">
    <property type="method" value="NMR"/>
    <property type="chains" value="B=1-115"/>
</dbReference>
<dbReference type="PDB" id="4V6X">
    <property type="method" value="EM"/>
    <property type="resolution" value="5.00 A"/>
    <property type="chains" value="Cu/Cv=1-115"/>
</dbReference>
<dbReference type="PDB" id="5DDZ">
    <property type="method" value="X-ray"/>
    <property type="resolution" value="1.50 A"/>
    <property type="chains" value="B=106-115"/>
</dbReference>
<dbReference type="PDB" id="5GU4">
    <property type="method" value="X-ray"/>
    <property type="resolution" value="1.55 A"/>
    <property type="chains" value="C/D=107-115"/>
</dbReference>
<dbReference type="PDBsum" id="1S4J"/>
<dbReference type="PDBsum" id="2JDL"/>
<dbReference type="PDBsum" id="2LBF"/>
<dbReference type="PDBsum" id="2W1O"/>
<dbReference type="PDBsum" id="4BEH"/>
<dbReference type="PDBsum" id="4V6X"/>
<dbReference type="PDBsum" id="5DDZ"/>
<dbReference type="PDBsum" id="5GU4"/>
<dbReference type="BMRB" id="P05387"/>
<dbReference type="SMR" id="P05387"/>
<dbReference type="BioGRID" id="112096">
    <property type="interactions" value="412"/>
</dbReference>
<dbReference type="ComplexPortal" id="CPX-5183">
    <property type="entry name" value="60S cytosolic large ribosomal subunit"/>
</dbReference>
<dbReference type="ComplexPortal" id="CPX-7664">
    <property type="entry name" value="60S cytosolic large ribosomal subunit, testis-specific variant"/>
</dbReference>
<dbReference type="ComplexPortal" id="CPX-7665">
    <property type="entry name" value="60S cytosolic large ribosomal subunit, striated muscle variant"/>
</dbReference>
<dbReference type="CORUM" id="P05387"/>
<dbReference type="FunCoup" id="P05387">
    <property type="interactions" value="1118"/>
</dbReference>
<dbReference type="IntAct" id="P05387">
    <property type="interactions" value="184"/>
</dbReference>
<dbReference type="MINT" id="P05387"/>
<dbReference type="STRING" id="9606.ENSP00000431240"/>
<dbReference type="ChEMBL" id="CHEMBL4295698"/>
<dbReference type="Allergome" id="1276">
    <property type="allergen name" value="Hom s P2"/>
</dbReference>
<dbReference type="GlyCosmos" id="P05387">
    <property type="glycosylation" value="2 sites, 2 glycans"/>
</dbReference>
<dbReference type="GlyGen" id="P05387">
    <property type="glycosylation" value="5 sites, 2 N-linked glycans (1 site), 2 O-linked glycans (4 sites)"/>
</dbReference>
<dbReference type="iPTMnet" id="P05387"/>
<dbReference type="PhosphoSitePlus" id="P05387"/>
<dbReference type="SwissPalm" id="P05387"/>
<dbReference type="BioMuta" id="RPLP2"/>
<dbReference type="jPOST" id="P05387"/>
<dbReference type="MassIVE" id="P05387"/>
<dbReference type="PaxDb" id="9606-ENSP00000322419"/>
<dbReference type="PeptideAtlas" id="P05387"/>
<dbReference type="PRIDE" id="P05387"/>
<dbReference type="ProteomicsDB" id="51832"/>
<dbReference type="Pumba" id="P05387"/>
<dbReference type="TopDownProteomics" id="P05387"/>
<dbReference type="Antibodypedia" id="22683">
    <property type="antibodies" value="202 antibodies from 29 providers"/>
</dbReference>
<dbReference type="DNASU" id="6181"/>
<dbReference type="Ensembl" id="ENST00000321153.9">
    <property type="protein sequence ID" value="ENSP00000322419.4"/>
    <property type="gene ID" value="ENSG00000177600.10"/>
</dbReference>
<dbReference type="Ensembl" id="ENST00000530797.6">
    <property type="protein sequence ID" value="ENSP00000431240.1"/>
    <property type="gene ID" value="ENSG00000177600.10"/>
</dbReference>
<dbReference type="Ensembl" id="ENST00000718237.1">
    <property type="protein sequence ID" value="ENSP00000520682.1"/>
    <property type="gene ID" value="ENSG00000177600.10"/>
</dbReference>
<dbReference type="GeneID" id="6181"/>
<dbReference type="KEGG" id="hsa:6181"/>
<dbReference type="MANE-Select" id="ENST00000321153.9">
    <property type="protein sequence ID" value="ENSP00000322419.4"/>
    <property type="RefSeq nucleotide sequence ID" value="NM_001004.4"/>
    <property type="RefSeq protein sequence ID" value="NP_000995.1"/>
</dbReference>
<dbReference type="UCSC" id="uc001lrq.2">
    <property type="organism name" value="human"/>
</dbReference>
<dbReference type="AGR" id="HGNC:10377"/>
<dbReference type="CTD" id="6181"/>
<dbReference type="DisGeNET" id="6181"/>
<dbReference type="GeneCards" id="RPLP2"/>
<dbReference type="HGNC" id="HGNC:10377">
    <property type="gene designation" value="RPLP2"/>
</dbReference>
<dbReference type="HPA" id="ENSG00000177600">
    <property type="expression patterns" value="Low tissue specificity"/>
</dbReference>
<dbReference type="MIM" id="180530">
    <property type="type" value="gene"/>
</dbReference>
<dbReference type="neXtProt" id="NX_P05387"/>
<dbReference type="OpenTargets" id="ENSG00000177600"/>
<dbReference type="PharmGKB" id="PA34776"/>
<dbReference type="VEuPathDB" id="HostDB:ENSG00000177600"/>
<dbReference type="eggNOG" id="KOG3449">
    <property type="taxonomic scope" value="Eukaryota"/>
</dbReference>
<dbReference type="GeneTree" id="ENSGT00550000074828"/>
<dbReference type="HOGENOM" id="CLU_114656_0_2_1"/>
<dbReference type="InParanoid" id="P05387"/>
<dbReference type="OMA" id="MKVIASY"/>
<dbReference type="OrthoDB" id="1227494at2759"/>
<dbReference type="PAN-GO" id="P05387">
    <property type="GO annotations" value="0 GO annotations based on evolutionary models"/>
</dbReference>
<dbReference type="PhylomeDB" id="P05387"/>
<dbReference type="TreeFam" id="TF320650"/>
<dbReference type="PathwayCommons" id="P05387"/>
<dbReference type="Reactome" id="R-HSA-156827">
    <property type="pathway name" value="L13a-mediated translational silencing of Ceruloplasmin expression"/>
</dbReference>
<dbReference type="Reactome" id="R-HSA-156902">
    <property type="pathway name" value="Peptide chain elongation"/>
</dbReference>
<dbReference type="Reactome" id="R-HSA-1799339">
    <property type="pathway name" value="SRP-dependent cotranslational protein targeting to membrane"/>
</dbReference>
<dbReference type="Reactome" id="R-HSA-192823">
    <property type="pathway name" value="Viral mRNA Translation"/>
</dbReference>
<dbReference type="Reactome" id="R-HSA-2408557">
    <property type="pathway name" value="Selenocysteine synthesis"/>
</dbReference>
<dbReference type="Reactome" id="R-HSA-6791226">
    <property type="pathway name" value="Major pathway of rRNA processing in the nucleolus and cytosol"/>
</dbReference>
<dbReference type="Reactome" id="R-HSA-72689">
    <property type="pathway name" value="Formation of a pool of free 40S subunits"/>
</dbReference>
<dbReference type="Reactome" id="R-HSA-72706">
    <property type="pathway name" value="GTP hydrolysis and joining of the 60S ribosomal subunit"/>
</dbReference>
<dbReference type="Reactome" id="R-HSA-72764">
    <property type="pathway name" value="Eukaryotic Translation Termination"/>
</dbReference>
<dbReference type="Reactome" id="R-HSA-9010553">
    <property type="pathway name" value="Regulation of expression of SLITs and ROBOs"/>
</dbReference>
<dbReference type="Reactome" id="R-HSA-9633012">
    <property type="pathway name" value="Response of EIF2AK4 (GCN2) to amino acid deficiency"/>
</dbReference>
<dbReference type="Reactome" id="R-HSA-975956">
    <property type="pathway name" value="Nonsense Mediated Decay (NMD) independent of the Exon Junction Complex (EJC)"/>
</dbReference>
<dbReference type="Reactome" id="R-HSA-975957">
    <property type="pathway name" value="Nonsense Mediated Decay (NMD) enhanced by the Exon Junction Complex (EJC)"/>
</dbReference>
<dbReference type="SignaLink" id="P05387"/>
<dbReference type="SIGNOR" id="P05387"/>
<dbReference type="BioGRID-ORCS" id="6181">
    <property type="hits" value="817 hits in 1165 CRISPR screens"/>
</dbReference>
<dbReference type="CD-CODE" id="91857CE7">
    <property type="entry name" value="Nucleolus"/>
</dbReference>
<dbReference type="ChiTaRS" id="RPLP2">
    <property type="organism name" value="human"/>
</dbReference>
<dbReference type="EvolutionaryTrace" id="P05387"/>
<dbReference type="GeneWiki" id="RPLP2"/>
<dbReference type="GenomeRNAi" id="6181"/>
<dbReference type="Pharos" id="P05387">
    <property type="development level" value="Tbio"/>
</dbReference>
<dbReference type="PRO" id="PR:P05387"/>
<dbReference type="Proteomes" id="UP000005640">
    <property type="component" value="Chromosome 11"/>
</dbReference>
<dbReference type="RNAct" id="P05387">
    <property type="molecule type" value="protein"/>
</dbReference>
<dbReference type="Bgee" id="ENSG00000177600">
    <property type="expression patterns" value="Expressed in nipple and 212 other cell types or tissues"/>
</dbReference>
<dbReference type="ExpressionAtlas" id="P05387">
    <property type="expression patterns" value="baseline and differential"/>
</dbReference>
<dbReference type="GO" id="GO:0005737">
    <property type="term" value="C:cytoplasm"/>
    <property type="evidence" value="ECO:0000303"/>
    <property type="project" value="ComplexPortal"/>
</dbReference>
<dbReference type="GO" id="GO:0005829">
    <property type="term" value="C:cytosol"/>
    <property type="evidence" value="ECO:0000304"/>
    <property type="project" value="Reactome"/>
</dbReference>
<dbReference type="GO" id="GO:0022625">
    <property type="term" value="C:cytosolic large ribosomal subunit"/>
    <property type="evidence" value="ECO:0000314"/>
    <property type="project" value="GO_Central"/>
</dbReference>
<dbReference type="GO" id="GO:0070062">
    <property type="term" value="C:extracellular exosome"/>
    <property type="evidence" value="ECO:0007005"/>
    <property type="project" value="UniProtKB"/>
</dbReference>
<dbReference type="GO" id="GO:0005925">
    <property type="term" value="C:focal adhesion"/>
    <property type="evidence" value="ECO:0007005"/>
    <property type="project" value="UniProtKB"/>
</dbReference>
<dbReference type="GO" id="GO:0016020">
    <property type="term" value="C:membrane"/>
    <property type="evidence" value="ECO:0007005"/>
    <property type="project" value="UniProtKB"/>
</dbReference>
<dbReference type="GO" id="GO:0003735">
    <property type="term" value="F:structural constituent of ribosome"/>
    <property type="evidence" value="ECO:0000314"/>
    <property type="project" value="GO_Central"/>
</dbReference>
<dbReference type="GO" id="GO:0002181">
    <property type="term" value="P:cytoplasmic translation"/>
    <property type="evidence" value="ECO:0000303"/>
    <property type="project" value="ComplexPortal"/>
</dbReference>
<dbReference type="GO" id="GO:0002182">
    <property type="term" value="P:cytoplasmic translational elongation"/>
    <property type="evidence" value="ECO:0007669"/>
    <property type="project" value="InterPro"/>
</dbReference>
<dbReference type="GO" id="GO:0006412">
    <property type="term" value="P:translation"/>
    <property type="evidence" value="ECO:0000303"/>
    <property type="project" value="UniProtKB"/>
</dbReference>
<dbReference type="CDD" id="cd05833">
    <property type="entry name" value="Ribosomal_P2"/>
    <property type="match status" value="1"/>
</dbReference>
<dbReference type="DisProt" id="DP00793"/>
<dbReference type="FunFam" id="1.10.10.1410:FF:000002">
    <property type="entry name" value="60S acidic ribosomal protein P2"/>
    <property type="match status" value="1"/>
</dbReference>
<dbReference type="Gene3D" id="1.10.10.1410">
    <property type="match status" value="1"/>
</dbReference>
<dbReference type="HAMAP" id="MF_01478">
    <property type="entry name" value="Ribosomal_L12_arch"/>
    <property type="match status" value="1"/>
</dbReference>
<dbReference type="InterPro" id="IPR038716">
    <property type="entry name" value="P1/P2_N_sf"/>
</dbReference>
<dbReference type="InterPro" id="IPR027534">
    <property type="entry name" value="Ribosomal_P1/P2"/>
</dbReference>
<dbReference type="InterPro" id="IPR044076">
    <property type="entry name" value="Ribosomal_P2"/>
</dbReference>
<dbReference type="PANTHER" id="PTHR21141">
    <property type="entry name" value="60S ACIDIC RIBOSOMAL PROTEIN FAMILY MEMBER"/>
    <property type="match status" value="1"/>
</dbReference>
<dbReference type="PANTHER" id="PTHR21141:SF5">
    <property type="entry name" value="LARGE RIBOSOMAL SUBUNIT PROTEIN P2"/>
    <property type="match status" value="1"/>
</dbReference>
<dbReference type="Pfam" id="PF00428">
    <property type="entry name" value="Ribosomal_60s"/>
    <property type="match status" value="1"/>
</dbReference>
<reference key="1">
    <citation type="journal article" date="1987" name="Mol. Cell. Biol.">
        <title>Human acidic ribosomal phosphoproteins P0, P1, and P2: analysis of cDNA clones, in vitro synthesis, and assembly.</title>
        <authorList>
            <person name="Rich B.E."/>
            <person name="Steitz J.A."/>
        </authorList>
    </citation>
    <scope>NUCLEOTIDE SEQUENCE [MRNA]</scope>
</reference>
<reference key="2">
    <citation type="journal article" date="1990" name="Br. J. Cancer">
        <title>A sequence previously identified as metastasis-related encodes an acidic ribosomal phosphoprotein, P2.</title>
        <authorList>
            <person name="Sharp M.G.F."/>
            <person name="Adams S.M."/>
            <person name="Elvin P."/>
            <person name="Walker R.A."/>
            <person name="Brammar W.J."/>
            <person name="Varley J.M."/>
        </authorList>
    </citation>
    <scope>NUCLEOTIDE SEQUENCE [MRNA]</scope>
    <source>
        <tissue>Mammary carcinoma</tissue>
    </source>
</reference>
<reference key="3">
    <citation type="journal article" date="2002" name="Genome Res.">
        <title>The human ribosomal protein genes: sequencing and comparative analysis of 73 genes.</title>
        <authorList>
            <person name="Yoshihama M."/>
            <person name="Uechi T."/>
            <person name="Asakawa S."/>
            <person name="Kawasaki K."/>
            <person name="Kato S."/>
            <person name="Higa S."/>
            <person name="Maeda N."/>
            <person name="Minoshima S."/>
            <person name="Tanaka T."/>
            <person name="Shimizu N."/>
            <person name="Kenmochi N."/>
        </authorList>
    </citation>
    <scope>NUCLEOTIDE SEQUENCE [GENOMIC DNA]</scope>
</reference>
<reference key="4">
    <citation type="journal article" date="2004" name="Nat. Genet.">
        <title>Complete sequencing and characterization of 21,243 full-length human cDNAs.</title>
        <authorList>
            <person name="Ota T."/>
            <person name="Suzuki Y."/>
            <person name="Nishikawa T."/>
            <person name="Otsuki T."/>
            <person name="Sugiyama T."/>
            <person name="Irie R."/>
            <person name="Wakamatsu A."/>
            <person name="Hayashi K."/>
            <person name="Sato H."/>
            <person name="Nagai K."/>
            <person name="Kimura K."/>
            <person name="Makita H."/>
            <person name="Sekine M."/>
            <person name="Obayashi M."/>
            <person name="Nishi T."/>
            <person name="Shibahara T."/>
            <person name="Tanaka T."/>
            <person name="Ishii S."/>
            <person name="Yamamoto J."/>
            <person name="Saito K."/>
            <person name="Kawai Y."/>
            <person name="Isono Y."/>
            <person name="Nakamura Y."/>
            <person name="Nagahari K."/>
            <person name="Murakami K."/>
            <person name="Yasuda T."/>
            <person name="Iwayanagi T."/>
            <person name="Wagatsuma M."/>
            <person name="Shiratori A."/>
            <person name="Sudo H."/>
            <person name="Hosoiri T."/>
            <person name="Kaku Y."/>
            <person name="Kodaira H."/>
            <person name="Kondo H."/>
            <person name="Sugawara M."/>
            <person name="Takahashi M."/>
            <person name="Kanda K."/>
            <person name="Yokoi T."/>
            <person name="Furuya T."/>
            <person name="Kikkawa E."/>
            <person name="Omura Y."/>
            <person name="Abe K."/>
            <person name="Kamihara K."/>
            <person name="Katsuta N."/>
            <person name="Sato K."/>
            <person name="Tanikawa M."/>
            <person name="Yamazaki M."/>
            <person name="Ninomiya K."/>
            <person name="Ishibashi T."/>
            <person name="Yamashita H."/>
            <person name="Murakawa K."/>
            <person name="Fujimori K."/>
            <person name="Tanai H."/>
            <person name="Kimata M."/>
            <person name="Watanabe M."/>
            <person name="Hiraoka S."/>
            <person name="Chiba Y."/>
            <person name="Ishida S."/>
            <person name="Ono Y."/>
            <person name="Takiguchi S."/>
            <person name="Watanabe S."/>
            <person name="Yosida M."/>
            <person name="Hotuta T."/>
            <person name="Kusano J."/>
            <person name="Kanehori K."/>
            <person name="Takahashi-Fujii A."/>
            <person name="Hara H."/>
            <person name="Tanase T.-O."/>
            <person name="Nomura Y."/>
            <person name="Togiya S."/>
            <person name="Komai F."/>
            <person name="Hara R."/>
            <person name="Takeuchi K."/>
            <person name="Arita M."/>
            <person name="Imose N."/>
            <person name="Musashino K."/>
            <person name="Yuuki H."/>
            <person name="Oshima A."/>
            <person name="Sasaki N."/>
            <person name="Aotsuka S."/>
            <person name="Yoshikawa Y."/>
            <person name="Matsunawa H."/>
            <person name="Ichihara T."/>
            <person name="Shiohata N."/>
            <person name="Sano S."/>
            <person name="Moriya S."/>
            <person name="Momiyama H."/>
            <person name="Satoh N."/>
            <person name="Takami S."/>
            <person name="Terashima Y."/>
            <person name="Suzuki O."/>
            <person name="Nakagawa S."/>
            <person name="Senoh A."/>
            <person name="Mizoguchi H."/>
            <person name="Goto Y."/>
            <person name="Shimizu F."/>
            <person name="Wakebe H."/>
            <person name="Hishigaki H."/>
            <person name="Watanabe T."/>
            <person name="Sugiyama A."/>
            <person name="Takemoto M."/>
            <person name="Kawakami B."/>
            <person name="Yamazaki M."/>
            <person name="Watanabe K."/>
            <person name="Kumagai A."/>
            <person name="Itakura S."/>
            <person name="Fukuzumi Y."/>
            <person name="Fujimori Y."/>
            <person name="Komiyama M."/>
            <person name="Tashiro H."/>
            <person name="Tanigami A."/>
            <person name="Fujiwara T."/>
            <person name="Ono T."/>
            <person name="Yamada K."/>
            <person name="Fujii Y."/>
            <person name="Ozaki K."/>
            <person name="Hirao M."/>
            <person name="Ohmori Y."/>
            <person name="Kawabata A."/>
            <person name="Hikiji T."/>
            <person name="Kobatake N."/>
            <person name="Inagaki H."/>
            <person name="Ikema Y."/>
            <person name="Okamoto S."/>
            <person name="Okitani R."/>
            <person name="Kawakami T."/>
            <person name="Noguchi S."/>
            <person name="Itoh T."/>
            <person name="Shigeta K."/>
            <person name="Senba T."/>
            <person name="Matsumura K."/>
            <person name="Nakajima Y."/>
            <person name="Mizuno T."/>
            <person name="Morinaga M."/>
            <person name="Sasaki M."/>
            <person name="Togashi T."/>
            <person name="Oyama M."/>
            <person name="Hata H."/>
            <person name="Watanabe M."/>
            <person name="Komatsu T."/>
            <person name="Mizushima-Sugano J."/>
            <person name="Satoh T."/>
            <person name="Shirai Y."/>
            <person name="Takahashi Y."/>
            <person name="Nakagawa K."/>
            <person name="Okumura K."/>
            <person name="Nagase T."/>
            <person name="Nomura N."/>
            <person name="Kikuchi H."/>
            <person name="Masuho Y."/>
            <person name="Yamashita R."/>
            <person name="Nakai K."/>
            <person name="Yada T."/>
            <person name="Nakamura Y."/>
            <person name="Ohara O."/>
            <person name="Isogai T."/>
            <person name="Sugano S."/>
        </authorList>
    </citation>
    <scope>NUCLEOTIDE SEQUENCE [LARGE SCALE MRNA]</scope>
    <source>
        <tissue>Thymus</tissue>
    </source>
</reference>
<reference key="5">
    <citation type="submission" date="2004-06" db="EMBL/GenBank/DDBJ databases">
        <title>Cloning of human full open reading frames in Gateway(TM) system entry vector (pDONR201).</title>
        <authorList>
            <person name="Ebert L."/>
            <person name="Schick M."/>
            <person name="Neubert P."/>
            <person name="Schatten R."/>
            <person name="Henze S."/>
            <person name="Korn B."/>
        </authorList>
    </citation>
    <scope>NUCLEOTIDE SEQUENCE [LARGE SCALE MRNA]</scope>
</reference>
<reference key="6">
    <citation type="journal article" date="2006" name="Nature">
        <title>Human chromosome 11 DNA sequence and analysis including novel gene identification.</title>
        <authorList>
            <person name="Taylor T.D."/>
            <person name="Noguchi H."/>
            <person name="Totoki Y."/>
            <person name="Toyoda A."/>
            <person name="Kuroki Y."/>
            <person name="Dewar K."/>
            <person name="Lloyd C."/>
            <person name="Itoh T."/>
            <person name="Takeda T."/>
            <person name="Kim D.-W."/>
            <person name="She X."/>
            <person name="Barlow K.F."/>
            <person name="Bloom T."/>
            <person name="Bruford E."/>
            <person name="Chang J.L."/>
            <person name="Cuomo C.A."/>
            <person name="Eichler E."/>
            <person name="FitzGerald M.G."/>
            <person name="Jaffe D.B."/>
            <person name="LaButti K."/>
            <person name="Nicol R."/>
            <person name="Park H.-S."/>
            <person name="Seaman C."/>
            <person name="Sougnez C."/>
            <person name="Yang X."/>
            <person name="Zimmer A.R."/>
            <person name="Zody M.C."/>
            <person name="Birren B.W."/>
            <person name="Nusbaum C."/>
            <person name="Fujiyama A."/>
            <person name="Hattori M."/>
            <person name="Rogers J."/>
            <person name="Lander E.S."/>
            <person name="Sakaki Y."/>
        </authorList>
    </citation>
    <scope>NUCLEOTIDE SEQUENCE [LARGE SCALE GENOMIC DNA]</scope>
</reference>
<reference key="7">
    <citation type="submission" date="2005-07" db="EMBL/GenBank/DDBJ databases">
        <authorList>
            <person name="Mural R.J."/>
            <person name="Istrail S."/>
            <person name="Sutton G."/>
            <person name="Florea L."/>
            <person name="Halpern A.L."/>
            <person name="Mobarry C.M."/>
            <person name="Lippert R."/>
            <person name="Walenz B."/>
            <person name="Shatkay H."/>
            <person name="Dew I."/>
            <person name="Miller J.R."/>
            <person name="Flanigan M.J."/>
            <person name="Edwards N.J."/>
            <person name="Bolanos R."/>
            <person name="Fasulo D."/>
            <person name="Halldorsson B.V."/>
            <person name="Hannenhalli S."/>
            <person name="Turner R."/>
            <person name="Yooseph S."/>
            <person name="Lu F."/>
            <person name="Nusskern D.R."/>
            <person name="Shue B.C."/>
            <person name="Zheng X.H."/>
            <person name="Zhong F."/>
            <person name="Delcher A.L."/>
            <person name="Huson D.H."/>
            <person name="Kravitz S.A."/>
            <person name="Mouchard L."/>
            <person name="Reinert K."/>
            <person name="Remington K.A."/>
            <person name="Clark A.G."/>
            <person name="Waterman M.S."/>
            <person name="Eichler E.E."/>
            <person name="Adams M.D."/>
            <person name="Hunkapiller M.W."/>
            <person name="Myers E.W."/>
            <person name="Venter J.C."/>
        </authorList>
    </citation>
    <scope>NUCLEOTIDE SEQUENCE [LARGE SCALE GENOMIC DNA]</scope>
</reference>
<reference key="8">
    <citation type="journal article" date="2004" name="Genome Res.">
        <title>The status, quality, and expansion of the NIH full-length cDNA project: the Mammalian Gene Collection (MGC).</title>
        <authorList>
            <consortium name="The MGC Project Team"/>
        </authorList>
    </citation>
    <scope>NUCLEOTIDE SEQUENCE [LARGE SCALE MRNA]</scope>
    <source>
        <tissue>Kidney</tissue>
        <tissue>Ovary</tissue>
        <tissue>Prostate</tissue>
        <tissue>Skin</tissue>
    </source>
</reference>
<reference key="9">
    <citation type="journal article" date="1992" name="Electrophoresis">
        <title>Human liver protein map: a reference database established by microsequencing and gel comparison.</title>
        <authorList>
            <person name="Hochstrasser D.F."/>
            <person name="Frutiger S."/>
            <person name="Paquet N."/>
            <person name="Bairoch A."/>
            <person name="Ravier F."/>
            <person name="Pasquali C."/>
            <person name="Sanchez J.-C."/>
            <person name="Tissot J.-D."/>
            <person name="Bjellqvist B."/>
            <person name="Vargas R."/>
            <person name="Appel R.D."/>
            <person name="Hughes G.J."/>
        </authorList>
    </citation>
    <scope>PROTEIN SEQUENCE OF 1-10</scope>
    <source>
        <tissue>Liver</tissue>
    </source>
</reference>
<reference key="10">
    <citation type="journal article" date="1999" name="Int. J. Cancer">
        <title>Antigens recognized by autologous antibody in patients with renal-cell carcinoma.</title>
        <authorList>
            <person name="Scanlan M.J."/>
            <person name="Gordan J.D."/>
            <person name="Williamson B."/>
            <person name="Stockert E."/>
            <person name="Bander N.H."/>
            <person name="Jongeneel C.V."/>
            <person name="Gure A.O."/>
            <person name="Jaeger D."/>
            <person name="Jaeger E."/>
            <person name="Knuth A."/>
            <person name="Chen Y.-T."/>
            <person name="Old L.J."/>
        </authorList>
    </citation>
    <scope>IDENTIFICATION AS A RENAL CANCER ANTIGEN</scope>
    <source>
        <tissue>Renal cell carcinoma</tissue>
    </source>
</reference>
<reference key="11">
    <citation type="journal article" date="2003" name="Nature">
        <title>Proteomic characterization of the human centrosome by protein correlation profiling.</title>
        <authorList>
            <person name="Andersen J.S."/>
            <person name="Wilkinson C.J."/>
            <person name="Mayor T."/>
            <person name="Mortensen P."/>
            <person name="Nigg E.A."/>
            <person name="Mann M."/>
        </authorList>
    </citation>
    <scope>IDENTIFICATION BY MASS SPECTROMETRY</scope>
    <source>
        <tissue>Lymphoblast</tissue>
    </source>
</reference>
<reference key="12">
    <citation type="journal article" date="2004" name="Proteomics">
        <title>Identification and characterization of phosphorylated proteins in the human pituitary.</title>
        <authorList>
            <person name="Giorgianni F."/>
            <person name="Beranova-Giorgianni S."/>
            <person name="Desiderio D.M."/>
        </authorList>
    </citation>
    <scope>PHOSPHORYLATION AT SER-102</scope>
    <source>
        <tissue>Pituitary</tissue>
    </source>
</reference>
<reference key="13">
    <citation type="journal article" date="2006" name="Cell">
        <title>Global, in vivo, and site-specific phosphorylation dynamics in signaling networks.</title>
        <authorList>
            <person name="Olsen J.V."/>
            <person name="Blagoev B."/>
            <person name="Gnad F."/>
            <person name="Macek B."/>
            <person name="Kumar C."/>
            <person name="Mortensen P."/>
            <person name="Mann M."/>
        </authorList>
    </citation>
    <scope>IDENTIFICATION BY MASS SPECTROMETRY [LARGE SCALE ANALYSIS]</scope>
    <source>
        <tissue>Cervix carcinoma</tissue>
    </source>
</reference>
<reference key="14">
    <citation type="journal article" date="2006" name="Nat. Biotechnol.">
        <title>A probability-based approach for high-throughput protein phosphorylation analysis and site localization.</title>
        <authorList>
            <person name="Beausoleil S.A."/>
            <person name="Villen J."/>
            <person name="Gerber S.A."/>
            <person name="Rush J."/>
            <person name="Gygi S.P."/>
        </authorList>
    </citation>
    <scope>PHOSPHORYLATION [LARGE SCALE ANALYSIS] AT SER-17</scope>
    <scope>IDENTIFICATION BY MASS SPECTROMETRY [LARGE SCALE ANALYSIS]</scope>
    <source>
        <tissue>Cervix carcinoma</tissue>
    </source>
</reference>
<reference key="15">
    <citation type="journal article" date="2008" name="Mol. Cell">
        <title>Kinase-selective enrichment enables quantitative phosphoproteomics of the kinome across the cell cycle.</title>
        <authorList>
            <person name="Daub H."/>
            <person name="Olsen J.V."/>
            <person name="Bairlein M."/>
            <person name="Gnad F."/>
            <person name="Oppermann F.S."/>
            <person name="Korner R."/>
            <person name="Greff Z."/>
            <person name="Keri G."/>
            <person name="Stemmann O."/>
            <person name="Mann M."/>
        </authorList>
    </citation>
    <scope>PHOSPHORYLATION [LARGE SCALE ANALYSIS] AT SER-79</scope>
    <scope>IDENTIFICATION BY MASS SPECTROMETRY [LARGE SCALE ANALYSIS]</scope>
    <source>
        <tissue>Cervix carcinoma</tissue>
    </source>
</reference>
<reference key="16">
    <citation type="journal article" date="2008" name="Proc. Natl. Acad. Sci. U.S.A.">
        <title>A quantitative atlas of mitotic phosphorylation.</title>
        <authorList>
            <person name="Dephoure N."/>
            <person name="Zhou C."/>
            <person name="Villen J."/>
            <person name="Beausoleil S.A."/>
            <person name="Bakalarski C.E."/>
            <person name="Elledge S.J."/>
            <person name="Gygi S.P."/>
        </authorList>
    </citation>
    <scope>PHOSPHORYLATION [LARGE SCALE ANALYSIS] AT SER-17; SER-79 AND SER-86</scope>
    <scope>IDENTIFICATION BY MASS SPECTROMETRY [LARGE SCALE ANALYSIS]</scope>
    <source>
        <tissue>Cervix carcinoma</tissue>
    </source>
</reference>
<reference key="17">
    <citation type="journal article" date="2009" name="Anal. Chem.">
        <title>Lys-N and trypsin cover complementary parts of the phosphoproteome in a refined SCX-based approach.</title>
        <authorList>
            <person name="Gauci S."/>
            <person name="Helbig A.O."/>
            <person name="Slijper M."/>
            <person name="Krijgsveld J."/>
            <person name="Heck A.J."/>
            <person name="Mohammed S."/>
        </authorList>
    </citation>
    <scope>IDENTIFICATION BY MASS SPECTROMETRY [LARGE SCALE ANALYSIS]</scope>
</reference>
<reference key="18">
    <citation type="journal article" date="2009" name="Mol. Cell. Proteomics">
        <title>Large-scale proteomics analysis of the human kinome.</title>
        <authorList>
            <person name="Oppermann F.S."/>
            <person name="Gnad F."/>
            <person name="Olsen J.V."/>
            <person name="Hornberger R."/>
            <person name="Greff Z."/>
            <person name="Keri G."/>
            <person name="Mann M."/>
            <person name="Daub H."/>
        </authorList>
    </citation>
    <scope>IDENTIFICATION BY MASS SPECTROMETRY [LARGE SCALE ANALYSIS]</scope>
</reference>
<reference key="19">
    <citation type="journal article" date="2009" name="Sci. Signal.">
        <title>Quantitative phosphoproteomic analysis of T cell receptor signaling reveals system-wide modulation of protein-protein interactions.</title>
        <authorList>
            <person name="Mayya V."/>
            <person name="Lundgren D.H."/>
            <person name="Hwang S.-I."/>
            <person name="Rezaul K."/>
            <person name="Wu L."/>
            <person name="Eng J.K."/>
            <person name="Rodionov V."/>
            <person name="Han D.K."/>
        </authorList>
    </citation>
    <scope>PHOSPHORYLATION [LARGE SCALE ANALYSIS] AT SER-17 AND SER-79</scope>
    <scope>IDENTIFICATION BY MASS SPECTROMETRY [LARGE SCALE ANALYSIS]</scope>
    <source>
        <tissue>Leukemic T-cell</tissue>
    </source>
</reference>
<reference key="20">
    <citation type="journal article" date="2009" name="Science">
        <title>Lysine acetylation targets protein complexes and co-regulates major cellular functions.</title>
        <authorList>
            <person name="Choudhary C."/>
            <person name="Kumar C."/>
            <person name="Gnad F."/>
            <person name="Nielsen M.L."/>
            <person name="Rehman M."/>
            <person name="Walther T.C."/>
            <person name="Olsen J.V."/>
            <person name="Mann M."/>
        </authorList>
    </citation>
    <scope>ACETYLATION [LARGE SCALE ANALYSIS] AT LYS-21</scope>
    <scope>IDENTIFICATION BY MASS SPECTROMETRY [LARGE SCALE ANALYSIS]</scope>
</reference>
<reference key="21">
    <citation type="journal article" date="2010" name="Sci. Signal.">
        <title>Quantitative phosphoproteomics reveals widespread full phosphorylation site occupancy during mitosis.</title>
        <authorList>
            <person name="Olsen J.V."/>
            <person name="Vermeulen M."/>
            <person name="Santamaria A."/>
            <person name="Kumar C."/>
            <person name="Miller M.L."/>
            <person name="Jensen L.J."/>
            <person name="Gnad F."/>
            <person name="Cox J."/>
            <person name="Jensen T.S."/>
            <person name="Nigg E.A."/>
            <person name="Brunak S."/>
            <person name="Mann M."/>
        </authorList>
    </citation>
    <scope>ACETYLATION [LARGE SCALE ANALYSIS] AT MET-1</scope>
    <scope>PHOSPHORYLATION [LARGE SCALE ANALYSIS] AT SER-17 AND SER-79</scope>
    <scope>IDENTIFICATION BY MASS SPECTROMETRY [LARGE SCALE ANALYSIS]</scope>
    <source>
        <tissue>Cervix carcinoma</tissue>
    </source>
</reference>
<reference key="22">
    <citation type="journal article" date="2011" name="BMC Syst. Biol.">
        <title>Initial characterization of the human central proteome.</title>
        <authorList>
            <person name="Burkard T.R."/>
            <person name="Planyavsky M."/>
            <person name="Kaupe I."/>
            <person name="Breitwieser F.P."/>
            <person name="Buerckstuemmer T."/>
            <person name="Bennett K.L."/>
            <person name="Superti-Furga G."/>
            <person name="Colinge J."/>
        </authorList>
    </citation>
    <scope>IDENTIFICATION BY MASS SPECTROMETRY [LARGE SCALE ANALYSIS]</scope>
</reference>
<reference key="23">
    <citation type="journal article" date="2011" name="Sci. Signal.">
        <title>System-wide temporal characterization of the proteome and phosphoproteome of human embryonic stem cell differentiation.</title>
        <authorList>
            <person name="Rigbolt K.T."/>
            <person name="Prokhorova T.A."/>
            <person name="Akimov V."/>
            <person name="Henningsen J."/>
            <person name="Johansen P.T."/>
            <person name="Kratchmarova I."/>
            <person name="Kassem M."/>
            <person name="Mann M."/>
            <person name="Olsen J.V."/>
            <person name="Blagoev B."/>
        </authorList>
    </citation>
    <scope>PHOSPHORYLATION [LARGE SCALE ANALYSIS] AT SER-17</scope>
    <scope>IDENTIFICATION BY MASS SPECTROMETRY [LARGE SCALE ANALYSIS]</scope>
</reference>
<reference key="24">
    <citation type="journal article" date="2013" name="J. Proteome Res.">
        <title>Toward a comprehensive characterization of a human cancer cell phosphoproteome.</title>
        <authorList>
            <person name="Zhou H."/>
            <person name="Di Palma S."/>
            <person name="Preisinger C."/>
            <person name="Peng M."/>
            <person name="Polat A.N."/>
            <person name="Heck A.J."/>
            <person name="Mohammed S."/>
        </authorList>
    </citation>
    <scope>PHOSPHORYLATION [LARGE SCALE ANALYSIS] AT SER-17; SER-19 AND SER-86</scope>
    <scope>IDENTIFICATION BY MASS SPECTROMETRY [LARGE SCALE ANALYSIS]</scope>
    <source>
        <tissue>Cervix carcinoma</tissue>
        <tissue>Erythroleukemia</tissue>
    </source>
</reference>
<reference key="25">
    <citation type="journal article" date="2014" name="Curr. Opin. Struct. Biol.">
        <title>A new system for naming ribosomal proteins.</title>
        <authorList>
            <person name="Ban N."/>
            <person name="Beckmann R."/>
            <person name="Cate J.H.D."/>
            <person name="Dinman J.D."/>
            <person name="Dragon F."/>
            <person name="Ellis S.R."/>
            <person name="Lafontaine D.L.J."/>
            <person name="Lindahl L."/>
            <person name="Liljas A."/>
            <person name="Lipton J.M."/>
            <person name="McAlear M.A."/>
            <person name="Moore P.B."/>
            <person name="Noller H.F."/>
            <person name="Ortega J."/>
            <person name="Panse V.G."/>
            <person name="Ramakrishnan V."/>
            <person name="Spahn C.M.T."/>
            <person name="Steitz T.A."/>
            <person name="Tchorzewski M."/>
            <person name="Tollervey D."/>
            <person name="Warren A.J."/>
            <person name="Williamson J.R."/>
            <person name="Wilson D."/>
            <person name="Yonath A."/>
            <person name="Yusupov M."/>
        </authorList>
    </citation>
    <scope>NOMENCLATURE</scope>
</reference>
<reference key="26">
    <citation type="journal article" date="2014" name="J. Proteomics">
        <title>An enzyme assisted RP-RPLC approach for in-depth analysis of human liver phosphoproteome.</title>
        <authorList>
            <person name="Bian Y."/>
            <person name="Song C."/>
            <person name="Cheng K."/>
            <person name="Dong M."/>
            <person name="Wang F."/>
            <person name="Huang J."/>
            <person name="Sun D."/>
            <person name="Wang L."/>
            <person name="Ye M."/>
            <person name="Zou H."/>
        </authorList>
    </citation>
    <scope>PHOSPHORYLATION [LARGE SCALE ANALYSIS] AT SER-79 AND SER-86</scope>
    <scope>IDENTIFICATION BY MASS SPECTROMETRY [LARGE SCALE ANALYSIS]</scope>
    <source>
        <tissue>Liver</tissue>
    </source>
</reference>
<reference key="27">
    <citation type="journal article" date="2015" name="Proteomics">
        <title>N-terminome analysis of the human mitochondrial proteome.</title>
        <authorList>
            <person name="Vaca Jacome A.S."/>
            <person name="Rabilloud T."/>
            <person name="Schaeffer-Reiss C."/>
            <person name="Rompais M."/>
            <person name="Ayoub D."/>
            <person name="Lane L."/>
            <person name="Bairoch A."/>
            <person name="Van Dorsselaer A."/>
            <person name="Carapito C."/>
        </authorList>
    </citation>
    <scope>IDENTIFICATION BY MASS SPECTROMETRY [LARGE SCALE ANALYSIS]</scope>
</reference>
<reference key="28">
    <citation type="journal article" date="2010" name="Nucleic Acids Res.">
        <title>Solution structure of the dimerization domain of ribosomal protein P2 provides insights for the structural organization of eukaryotic stalk.</title>
        <authorList>
            <person name="Lee K.M."/>
            <person name="Yu C.W."/>
            <person name="Chan D.S."/>
            <person name="Chiu T.Y."/>
            <person name="Zhu G."/>
            <person name="Sze K.H."/>
            <person name="Shaw P.C."/>
            <person name="Wong K.B."/>
        </authorList>
    </citation>
    <scope>STRUCTURE BY NMR OF 1-69</scope>
    <scope>SUBUNIT</scope>
</reference>
<reference key="29">
    <citation type="journal article" date="2013" name="Nature">
        <title>Structures of the human and Drosophila 80S ribosome.</title>
        <authorList>
            <person name="Anger A.M."/>
            <person name="Armache J.P."/>
            <person name="Berninghausen O."/>
            <person name="Habeck M."/>
            <person name="Subklewe M."/>
            <person name="Wilson D.N."/>
            <person name="Beckmann R."/>
        </authorList>
    </citation>
    <scope>STRUCTURE BY ELECTRON MICROSCOPY (5.0 ANGSTROMS) OF 80S RIBOSOME</scope>
</reference>